<reference key="1">
    <citation type="submission" date="2007-03" db="EMBL/GenBank/DDBJ databases">
        <title>Complete sequence of Shewanella loihica PV-4.</title>
        <authorList>
            <consortium name="US DOE Joint Genome Institute"/>
            <person name="Copeland A."/>
            <person name="Lucas S."/>
            <person name="Lapidus A."/>
            <person name="Barry K."/>
            <person name="Detter J.C."/>
            <person name="Glavina del Rio T."/>
            <person name="Hammon N."/>
            <person name="Israni S."/>
            <person name="Dalin E."/>
            <person name="Tice H."/>
            <person name="Pitluck S."/>
            <person name="Chain P."/>
            <person name="Malfatti S."/>
            <person name="Shin M."/>
            <person name="Vergez L."/>
            <person name="Schmutz J."/>
            <person name="Larimer F."/>
            <person name="Land M."/>
            <person name="Hauser L."/>
            <person name="Kyrpides N."/>
            <person name="Mikhailova N."/>
            <person name="Romine M.F."/>
            <person name="Serres G."/>
            <person name="Fredrickson J."/>
            <person name="Tiedje J."/>
            <person name="Richardson P."/>
        </authorList>
    </citation>
    <scope>NUCLEOTIDE SEQUENCE [LARGE SCALE GENOMIC DNA]</scope>
    <source>
        <strain>ATCC BAA-1088 / PV-4</strain>
    </source>
</reference>
<gene>
    <name evidence="1" type="primary">nagB</name>
    <name type="ordered locus">Shew_0815</name>
</gene>
<sequence length="268" mass="28596">MQIVILKDSAEVAEYGANLIINQLKRKPDSVLGLATGSTPVSLYQRLVAANQAGAVSFEGVTSFNLDEYLGLEGSHPQSYRYFMDSQLFDAIDINKANTHVPPGDAEDPIAACEAYEAQIQAAGGIDIQLLGIGRNGHIGFNEPSSGLMSRTRVKTLTQATIEDNARFFAEGEYQPHLSITMGIGTILDAKKVLLLATGESKADAIRAAVEGALSAACPASALQLHRDAVLVIDEAAASKLADKEFYRHIEAENQLLQARLAALKAGE</sequence>
<evidence type="ECO:0000255" key="1">
    <source>
        <dbReference type="HAMAP-Rule" id="MF_01241"/>
    </source>
</evidence>
<dbReference type="EC" id="3.5.99.6" evidence="1"/>
<dbReference type="EMBL" id="CP000606">
    <property type="protein sequence ID" value="ABO22687.1"/>
    <property type="molecule type" value="Genomic_DNA"/>
</dbReference>
<dbReference type="RefSeq" id="WP_011864621.1">
    <property type="nucleotide sequence ID" value="NC_009092.1"/>
</dbReference>
<dbReference type="SMR" id="A3QB39"/>
<dbReference type="STRING" id="323850.Shew_0815"/>
<dbReference type="KEGG" id="slo:Shew_0815"/>
<dbReference type="eggNOG" id="COG0363">
    <property type="taxonomic scope" value="Bacteria"/>
</dbReference>
<dbReference type="HOGENOM" id="CLU_049611_1_1_6"/>
<dbReference type="OrthoDB" id="9791139at2"/>
<dbReference type="UniPathway" id="UPA00629">
    <property type="reaction ID" value="UER00684"/>
</dbReference>
<dbReference type="Proteomes" id="UP000001558">
    <property type="component" value="Chromosome"/>
</dbReference>
<dbReference type="GO" id="GO:0005737">
    <property type="term" value="C:cytoplasm"/>
    <property type="evidence" value="ECO:0007669"/>
    <property type="project" value="TreeGrafter"/>
</dbReference>
<dbReference type="GO" id="GO:0004342">
    <property type="term" value="F:glucosamine-6-phosphate deaminase activity"/>
    <property type="evidence" value="ECO:0007669"/>
    <property type="project" value="UniProtKB-UniRule"/>
</dbReference>
<dbReference type="GO" id="GO:0042802">
    <property type="term" value="F:identical protein binding"/>
    <property type="evidence" value="ECO:0007669"/>
    <property type="project" value="TreeGrafter"/>
</dbReference>
<dbReference type="GO" id="GO:0005975">
    <property type="term" value="P:carbohydrate metabolic process"/>
    <property type="evidence" value="ECO:0007669"/>
    <property type="project" value="InterPro"/>
</dbReference>
<dbReference type="GO" id="GO:0006043">
    <property type="term" value="P:glucosamine catabolic process"/>
    <property type="evidence" value="ECO:0007669"/>
    <property type="project" value="TreeGrafter"/>
</dbReference>
<dbReference type="GO" id="GO:0006046">
    <property type="term" value="P:N-acetylglucosamine catabolic process"/>
    <property type="evidence" value="ECO:0007669"/>
    <property type="project" value="TreeGrafter"/>
</dbReference>
<dbReference type="GO" id="GO:0019262">
    <property type="term" value="P:N-acetylneuraminate catabolic process"/>
    <property type="evidence" value="ECO:0007669"/>
    <property type="project" value="UniProtKB-UniRule"/>
</dbReference>
<dbReference type="CDD" id="cd01399">
    <property type="entry name" value="GlcN6P_deaminase"/>
    <property type="match status" value="1"/>
</dbReference>
<dbReference type="FunFam" id="3.40.50.1360:FF:000003">
    <property type="entry name" value="Glucosamine-6-phosphate deaminase"/>
    <property type="match status" value="1"/>
</dbReference>
<dbReference type="Gene3D" id="3.40.50.1360">
    <property type="match status" value="1"/>
</dbReference>
<dbReference type="HAMAP" id="MF_01241">
    <property type="entry name" value="GlcN6P_deamin"/>
    <property type="match status" value="1"/>
</dbReference>
<dbReference type="InterPro" id="IPR006148">
    <property type="entry name" value="Glc/Gal-6P_isomerase"/>
</dbReference>
<dbReference type="InterPro" id="IPR004547">
    <property type="entry name" value="Glucosamine6P_isomerase"/>
</dbReference>
<dbReference type="InterPro" id="IPR018321">
    <property type="entry name" value="Glucosamine6P_isomerase_CS"/>
</dbReference>
<dbReference type="InterPro" id="IPR037171">
    <property type="entry name" value="NagB/RpiA_transferase-like"/>
</dbReference>
<dbReference type="NCBIfam" id="TIGR00502">
    <property type="entry name" value="nagB"/>
    <property type="match status" value="1"/>
</dbReference>
<dbReference type="NCBIfam" id="NF001684">
    <property type="entry name" value="PRK00443.1-4"/>
    <property type="match status" value="1"/>
</dbReference>
<dbReference type="PANTHER" id="PTHR11280">
    <property type="entry name" value="GLUCOSAMINE-6-PHOSPHATE ISOMERASE"/>
    <property type="match status" value="1"/>
</dbReference>
<dbReference type="PANTHER" id="PTHR11280:SF5">
    <property type="entry name" value="GLUCOSAMINE-6-PHOSPHATE ISOMERASE"/>
    <property type="match status" value="1"/>
</dbReference>
<dbReference type="Pfam" id="PF01182">
    <property type="entry name" value="Glucosamine_iso"/>
    <property type="match status" value="1"/>
</dbReference>
<dbReference type="SUPFAM" id="SSF100950">
    <property type="entry name" value="NagB/RpiA/CoA transferase-like"/>
    <property type="match status" value="1"/>
</dbReference>
<dbReference type="PROSITE" id="PS01161">
    <property type="entry name" value="GLC_GALNAC_ISOMERASE"/>
    <property type="match status" value="1"/>
</dbReference>
<accession>A3QB39</accession>
<protein>
    <recommendedName>
        <fullName evidence="1">Glucosamine-6-phosphate deaminase</fullName>
        <ecNumber evidence="1">3.5.99.6</ecNumber>
    </recommendedName>
    <alternativeName>
        <fullName evidence="1">GlcN6P deaminase</fullName>
        <shortName evidence="1">GNPDA</shortName>
    </alternativeName>
    <alternativeName>
        <fullName evidence="1">Glucosamine-6-phosphate isomerase</fullName>
    </alternativeName>
</protein>
<proteinExistence type="inferred from homology"/>
<organism>
    <name type="scientific">Shewanella loihica (strain ATCC BAA-1088 / PV-4)</name>
    <dbReference type="NCBI Taxonomy" id="323850"/>
    <lineage>
        <taxon>Bacteria</taxon>
        <taxon>Pseudomonadati</taxon>
        <taxon>Pseudomonadota</taxon>
        <taxon>Gammaproteobacteria</taxon>
        <taxon>Alteromonadales</taxon>
        <taxon>Shewanellaceae</taxon>
        <taxon>Shewanella</taxon>
    </lineage>
</organism>
<feature type="chain" id="PRO_1000067017" description="Glucosamine-6-phosphate deaminase">
    <location>
        <begin position="1"/>
        <end position="268"/>
    </location>
</feature>
<feature type="active site" description="Proton acceptor; for enolization step" evidence="1">
    <location>
        <position position="67"/>
    </location>
</feature>
<feature type="active site" description="For ring-opening step" evidence="1">
    <location>
        <position position="136"/>
    </location>
</feature>
<feature type="active site" description="Proton acceptor; for ring-opening step" evidence="1">
    <location>
        <position position="138"/>
    </location>
</feature>
<feature type="active site" description="For ring-opening step" evidence="1">
    <location>
        <position position="143"/>
    </location>
</feature>
<keyword id="KW-0119">Carbohydrate metabolism</keyword>
<keyword id="KW-0378">Hydrolase</keyword>
<keyword id="KW-1185">Reference proteome</keyword>
<comment type="function">
    <text evidence="1">Catalyzes the reversible isomerization-deamination of glucosamine 6-phosphate (GlcN6P) to form fructose 6-phosphate (Fru6P) and ammonium ion.</text>
</comment>
<comment type="catalytic activity">
    <reaction evidence="1">
        <text>alpha-D-glucosamine 6-phosphate + H2O = beta-D-fructose 6-phosphate + NH4(+)</text>
        <dbReference type="Rhea" id="RHEA:12172"/>
        <dbReference type="ChEBI" id="CHEBI:15377"/>
        <dbReference type="ChEBI" id="CHEBI:28938"/>
        <dbReference type="ChEBI" id="CHEBI:57634"/>
        <dbReference type="ChEBI" id="CHEBI:75989"/>
        <dbReference type="EC" id="3.5.99.6"/>
    </reaction>
</comment>
<comment type="pathway">
    <text evidence="1">Amino-sugar metabolism; N-acetylneuraminate degradation; D-fructose 6-phosphate from N-acetylneuraminate: step 5/5.</text>
</comment>
<comment type="subunit">
    <text evidence="1">Homohexamer.</text>
</comment>
<comment type="similarity">
    <text evidence="1">Belongs to the glucosamine/galactosamine-6-phosphate isomerase family. NagB subfamily.</text>
</comment>
<name>NAGB_SHELP</name>